<sequence>MESKKEGVASAPTSPESRRTRSNGKGKTIAEATPPSVTVVSTKVTPSPRGGWRKGAAILDFILRLGAISSAIGAAAVMGNNEQILPFFTQFFQFHVQWDDFPMFQFFVFANGAAVVFLILSLPFSIVCIVRPFAVGPRLLLVIVDIFAMALVIAAASAAAAVVYLAHNGSQDANWIAICQQYTDFCQVTSQAVVASFVAAVFLICLIVLSSVALKKGLKREFGW</sequence>
<keyword id="KW-1003">Cell membrane</keyword>
<keyword id="KW-0961">Cell wall biogenesis/degradation</keyword>
<keyword id="KW-0325">Glycoprotein</keyword>
<keyword id="KW-0472">Membrane</keyword>
<keyword id="KW-0812">Transmembrane</keyword>
<keyword id="KW-1133">Transmembrane helix</keyword>
<evidence type="ECO:0000250" key="1"/>
<evidence type="ECO:0000255" key="2"/>
<evidence type="ECO:0000256" key="3">
    <source>
        <dbReference type="SAM" id="MobiDB-lite"/>
    </source>
</evidence>
<evidence type="ECO:0000305" key="4"/>
<name>CASP3_VIGUN</name>
<reference key="1">
    <citation type="submission" date="2008-04" db="EMBL/GenBank/DDBJ databases">
        <title>ESTs from drought stressed and non-stressed leaves, stem meristem and roots of drought tolerant and drought sensitive cowpea (Vigna unguiculata).</title>
        <authorList>
            <person name="Hearne S.J."/>
            <person name="Bishop R."/>
            <person name="Town C.D."/>
            <person name="Moskal W.A. Jr."/>
            <person name="Zhuang J."/>
            <person name="Viswanathan L.D."/>
            <person name="Kriga Y."/>
            <person name="Shatsman S."/>
            <person name="Shetty J."/>
            <person name="Ferguson M.E."/>
            <person name="Hanson J."/>
        </authorList>
    </citation>
    <scope>NUCLEOTIDE SEQUENCE [LARGE SCALE MRNA]</scope>
    <source>
        <tissue>Root</tissue>
    </source>
</reference>
<reference key="2">
    <citation type="journal article" date="2014" name="Plant Physiol.">
        <title>Functional and evolutionary analysis of the CASPARIAN STRIP MEMBRANE DOMAIN PROTEIN family.</title>
        <authorList>
            <person name="Roppolo D."/>
            <person name="Boeckmann B."/>
            <person name="Pfister A."/>
            <person name="Boutet E."/>
            <person name="Rubio M.C."/>
            <person name="Denervaud-Tendon V."/>
            <person name="Vermeer J.E."/>
            <person name="Gheyselinck J."/>
            <person name="Xenarios I."/>
            <person name="Geldner N."/>
        </authorList>
    </citation>
    <scope>GENE FAMILY</scope>
    <scope>NOMENCLATURE</scope>
</reference>
<proteinExistence type="evidence at transcript level"/>
<accession>P0DI41</accession>
<comment type="function">
    <text evidence="1">Regulates membrane-cell wall junctions and localized cell wall deposition. Required for establishment of the Casparian strip membrane domain (CSD) and the subsequent formation of Casparian strips, a cell wall modification of the root endodermis that determines an apoplastic barrier between the intraorganismal apoplasm and the extraorganismal apoplasm and prevents lateral diffusion (By similarity).</text>
</comment>
<comment type="subunit">
    <text evidence="1">Homodimer and heterodimers.</text>
</comment>
<comment type="subcellular location">
    <subcellularLocation>
        <location evidence="1">Cell membrane</location>
        <topology evidence="1">Multi-pass membrane protein</topology>
    </subcellularLocation>
    <text evidence="1">Very restricted localization following a belt shape within the plasma membrane which coincides with the position of the Casparian strip membrane domain in the root endodermis.</text>
</comment>
<comment type="similarity">
    <text evidence="4">Belongs to the Casparian strip membrane proteins (CASP) family.</text>
</comment>
<dbReference type="EMBL" id="FF389098">
    <property type="status" value="NOT_ANNOTATED_CDS"/>
    <property type="molecule type" value="mRNA"/>
</dbReference>
<dbReference type="SMR" id="P0DI41"/>
<dbReference type="GO" id="GO:0005886">
    <property type="term" value="C:plasma membrane"/>
    <property type="evidence" value="ECO:0007669"/>
    <property type="project" value="UniProtKB-SubCell"/>
</dbReference>
<dbReference type="GO" id="GO:0071555">
    <property type="term" value="P:cell wall organization"/>
    <property type="evidence" value="ECO:0007669"/>
    <property type="project" value="UniProtKB-KW"/>
</dbReference>
<dbReference type="InterPro" id="IPR006459">
    <property type="entry name" value="CASP/CASPL"/>
</dbReference>
<dbReference type="InterPro" id="IPR006702">
    <property type="entry name" value="CASP_dom"/>
</dbReference>
<dbReference type="InterPro" id="IPR044173">
    <property type="entry name" value="CASPL"/>
</dbReference>
<dbReference type="NCBIfam" id="TIGR01569">
    <property type="entry name" value="A_tha_TIGR01569"/>
    <property type="match status" value="1"/>
</dbReference>
<dbReference type="PANTHER" id="PTHR36488:SF11">
    <property type="entry name" value="CASP-LIKE PROTEIN"/>
    <property type="match status" value="1"/>
</dbReference>
<dbReference type="PANTHER" id="PTHR36488">
    <property type="entry name" value="CASP-LIKE PROTEIN 1U1"/>
    <property type="match status" value="1"/>
</dbReference>
<dbReference type="Pfam" id="PF04535">
    <property type="entry name" value="CASP_dom"/>
    <property type="match status" value="1"/>
</dbReference>
<protein>
    <recommendedName>
        <fullName>Casparian strip membrane protein 3</fullName>
        <shortName>VuCASP3</shortName>
    </recommendedName>
</protein>
<organism>
    <name type="scientific">Vigna unguiculata</name>
    <name type="common">Cowpea</name>
    <dbReference type="NCBI Taxonomy" id="3917"/>
    <lineage>
        <taxon>Eukaryota</taxon>
        <taxon>Viridiplantae</taxon>
        <taxon>Streptophyta</taxon>
        <taxon>Embryophyta</taxon>
        <taxon>Tracheophyta</taxon>
        <taxon>Spermatophyta</taxon>
        <taxon>Magnoliopsida</taxon>
        <taxon>eudicotyledons</taxon>
        <taxon>Gunneridae</taxon>
        <taxon>Pentapetalae</taxon>
        <taxon>rosids</taxon>
        <taxon>fabids</taxon>
        <taxon>Fabales</taxon>
        <taxon>Fabaceae</taxon>
        <taxon>Papilionoideae</taxon>
        <taxon>50 kb inversion clade</taxon>
        <taxon>NPAAA clade</taxon>
        <taxon>indigoferoid/millettioid clade</taxon>
        <taxon>Phaseoleae</taxon>
        <taxon>Vigna</taxon>
    </lineage>
</organism>
<feature type="chain" id="PRO_0000417816" description="Casparian strip membrane protein 3">
    <location>
        <begin position="1"/>
        <end position="224"/>
    </location>
</feature>
<feature type="topological domain" description="Cytoplasmic" evidence="2">
    <location>
        <begin position="1"/>
        <end position="57"/>
    </location>
</feature>
<feature type="transmembrane region" description="Helical" evidence="2">
    <location>
        <begin position="58"/>
        <end position="78"/>
    </location>
</feature>
<feature type="topological domain" description="Extracellular" evidence="2">
    <location>
        <begin position="79"/>
        <end position="105"/>
    </location>
</feature>
<feature type="transmembrane region" description="Helical" evidence="2">
    <location>
        <begin position="106"/>
        <end position="126"/>
    </location>
</feature>
<feature type="topological domain" description="Cytoplasmic" evidence="2">
    <location>
        <begin position="127"/>
        <end position="138"/>
    </location>
</feature>
<feature type="transmembrane region" description="Helical" evidence="2">
    <location>
        <begin position="139"/>
        <end position="159"/>
    </location>
</feature>
<feature type="topological domain" description="Extracellular" evidence="2">
    <location>
        <begin position="160"/>
        <end position="191"/>
    </location>
</feature>
<feature type="transmembrane region" description="Helical" evidence="2">
    <location>
        <begin position="192"/>
        <end position="212"/>
    </location>
</feature>
<feature type="topological domain" description="Cytoplasmic" evidence="2">
    <location>
        <begin position="213"/>
        <end position="224"/>
    </location>
</feature>
<feature type="region of interest" description="Disordered" evidence="3">
    <location>
        <begin position="1"/>
        <end position="30"/>
    </location>
</feature>
<feature type="glycosylation site" description="N-linked (GlcNAc...) asparagine" evidence="2">
    <location>
        <position position="168"/>
    </location>
</feature>